<feature type="chain" id="PRO_0000445829" description="Psilocybin synthase">
    <location>
        <begin position="1"/>
        <end position="309"/>
    </location>
</feature>
<feature type="short sequence motif" description="NPPF" evidence="1">
    <location>
        <begin position="183"/>
        <end position="186"/>
    </location>
</feature>
<feature type="binding site" evidence="1">
    <location>
        <position position="58"/>
    </location>
    <ligand>
        <name>Mg(2+)</name>
        <dbReference type="ChEBI" id="CHEBI:18420"/>
        <label>1</label>
    </ligand>
</feature>
<feature type="binding site" evidence="1">
    <location>
        <position position="75"/>
    </location>
    <ligand>
        <name>baeocystin</name>
        <dbReference type="ChEBI" id="CHEBI:139071"/>
    </ligand>
</feature>
<feature type="binding site" evidence="1">
    <location>
        <position position="75"/>
    </location>
    <ligand>
        <name>norbaeocystin</name>
        <dbReference type="ChEBI" id="CHEBI:139070"/>
    </ligand>
</feature>
<feature type="binding site" evidence="1">
    <location>
        <position position="75"/>
    </location>
    <ligand>
        <name>S-adenosyl-L-homocysteine</name>
        <dbReference type="ChEBI" id="CHEBI:57856"/>
    </ligand>
</feature>
<feature type="binding site" evidence="1">
    <location>
        <position position="107"/>
    </location>
    <ligand>
        <name>S-adenosyl-L-homocysteine</name>
        <dbReference type="ChEBI" id="CHEBI:57856"/>
    </ligand>
</feature>
<feature type="binding site" evidence="1">
    <location>
        <position position="131"/>
    </location>
    <ligand>
        <name>S-adenosyl-L-homocysteine</name>
        <dbReference type="ChEBI" id="CHEBI:57856"/>
    </ligand>
</feature>
<feature type="binding site" evidence="1">
    <location>
        <position position="158"/>
    </location>
    <ligand>
        <name>S-adenosyl-L-homocysteine</name>
        <dbReference type="ChEBI" id="CHEBI:57856"/>
    </ligand>
</feature>
<feature type="binding site" evidence="1">
    <location>
        <position position="183"/>
    </location>
    <ligand>
        <name>baeocystin</name>
        <dbReference type="ChEBI" id="CHEBI:139071"/>
    </ligand>
</feature>
<feature type="binding site" evidence="1">
    <location>
        <position position="183"/>
    </location>
    <ligand>
        <name>norbaeocystin</name>
        <dbReference type="ChEBI" id="CHEBI:139070"/>
    </ligand>
</feature>
<feature type="binding site" evidence="1">
    <location>
        <position position="183"/>
    </location>
    <ligand>
        <name>S-adenosyl-L-homocysteine</name>
        <dbReference type="ChEBI" id="CHEBI:57856"/>
    </ligand>
</feature>
<feature type="binding site" evidence="1">
    <location>
        <position position="184"/>
    </location>
    <ligand>
        <name>baeocystin</name>
        <dbReference type="ChEBI" id="CHEBI:139071"/>
    </ligand>
</feature>
<feature type="binding site" evidence="1">
    <location>
        <position position="184"/>
    </location>
    <ligand>
        <name>norbaeocystin</name>
        <dbReference type="ChEBI" id="CHEBI:139070"/>
    </ligand>
</feature>
<feature type="binding site" evidence="1">
    <location>
        <position position="187"/>
    </location>
    <ligand>
        <name>baeocystin</name>
        <dbReference type="ChEBI" id="CHEBI:139071"/>
    </ligand>
</feature>
<feature type="binding site" evidence="1">
    <location>
        <position position="187"/>
    </location>
    <ligand>
        <name>norbaeocystin</name>
        <dbReference type="ChEBI" id="CHEBI:139070"/>
    </ligand>
</feature>
<feature type="binding site" evidence="1">
    <location>
        <position position="203"/>
    </location>
    <ligand>
        <name>baeocystin</name>
        <dbReference type="ChEBI" id="CHEBI:139071"/>
    </ligand>
</feature>
<feature type="binding site" evidence="1">
    <location>
        <position position="203"/>
    </location>
    <ligand>
        <name>norbaeocystin</name>
        <dbReference type="ChEBI" id="CHEBI:139070"/>
    </ligand>
</feature>
<feature type="binding site" evidence="1">
    <location>
        <position position="272"/>
    </location>
    <ligand>
        <name>Mg(2+)</name>
        <dbReference type="ChEBI" id="CHEBI:18420"/>
        <label>2</label>
    </ligand>
</feature>
<feature type="binding site" evidence="1">
    <location>
        <position position="281"/>
    </location>
    <ligand>
        <name>baeocystin</name>
        <dbReference type="ChEBI" id="CHEBI:139071"/>
    </ligand>
</feature>
<feature type="binding site" evidence="1">
    <location>
        <position position="281"/>
    </location>
    <ligand>
        <name>norbaeocystin</name>
        <dbReference type="ChEBI" id="CHEBI:139070"/>
    </ligand>
</feature>
<keyword id="KW-0460">Magnesium</keyword>
<keyword id="KW-0479">Metal-binding</keyword>
<keyword id="KW-0489">Methyltransferase</keyword>
<keyword id="KW-0949">S-adenosyl-L-methionine</keyword>
<keyword id="KW-0808">Transferase</keyword>
<protein>
    <recommendedName>
        <fullName evidence="6">Psilocybin synthase</fullName>
        <ecNumber evidence="1">2.1.1.-</ecNumber>
        <ecNumber evidence="1">2.1.1.345</ecNumber>
    </recommendedName>
    <alternativeName>
        <fullName evidence="5">Psilocybin biosynthesis methyltransferase</fullName>
    </alternativeName>
</protein>
<sequence>MHIRNPYRDGVDYQALAEAFPALKPHVTVNSDNTTSIDFAVPEAQRLYTAALLHRDFGLTITLPEDRLCPTVPNRLNYVLWVEDILKVTSDALGLPDNRQVKGIDIGTGASAIYPMLACSRFKTWSMVATEVDQKCIDTARLNVIANNLQERLAIIATSVDGPILVPLLQANSDFEYDFTMCNPPFYDGASDMQTSDAAKGFGFGVNAPHTGTVLEMATEGGESAFVAQMVRESLNLQTRCRWFTSNLGKLKSLYEIVGLLREHQISNYAINEYVQGATRRYAIAWSFIDVRLPDHLSRPSNPDLSSLF</sequence>
<gene>
    <name evidence="5" type="primary">psiM</name>
</gene>
<comment type="function">
    <text evidence="1 3 4">Methyltransferase; part of the gene cluster that mediates the biosynthesis of psilocybin, a psychotropic tryptamine-derived natural product (PubMed:28763571, PubMed:30283667). The first step in the pathway is the decarboxylation of L-tryptophan to tryptamine by the decarboxylase psiD. PsiD does not decarboxylate phenylalanine, tyrosine, or 5-hydroxy- L -tryptophan (5-HTP) (PubMed:30283667). 4-hydroxy-L-tryptophan is accepted as substrate by psiD as well. The cytochrome P450 monooxygenase psiH then converts tryptamine to 4-hydroxytryptamine. The kinase psiK catalyzes the 4-O-phosphorylation step by converting 4-hydroxytryptamine into norbaeocystin. The methyltransferase psiM then catalyzes iterative methyl transfer to the amino group of norbaeocystin to yield psilocybin via a monomethylated intermediate, baeocystin. 4-hydroxy-6-methyl-l-tryptophancan also be converted the decarboxylase PsiD, kinase PsiK, and methyltransferase PsiM into respectively 6-methyl-norbaeocystin, 6-methylbaeocystin, and 6-methylpsilocybin (By similarity).</text>
</comment>
<comment type="catalytic activity">
    <reaction evidence="1">
        <text>norbaeocystin + 2 S-adenosyl-L-methionine = psilocybin + 2 S-adenosyl-L-homocysteine + 2 H(+)</text>
        <dbReference type="Rhea" id="RHEA:55568"/>
        <dbReference type="ChEBI" id="CHEBI:15378"/>
        <dbReference type="ChEBI" id="CHEBI:57856"/>
        <dbReference type="ChEBI" id="CHEBI:59789"/>
        <dbReference type="ChEBI" id="CHEBI:139070"/>
        <dbReference type="ChEBI" id="CHEBI:139072"/>
        <dbReference type="EC" id="2.1.1.345"/>
    </reaction>
    <physiologicalReaction direction="left-to-right" evidence="1">
        <dbReference type="Rhea" id="RHEA:55569"/>
    </physiologicalReaction>
</comment>
<comment type="catalytic activity">
    <reaction evidence="1">
        <text>norbaeocystin + S-adenosyl-L-methionine = baeocystin + S-adenosyl-L-homocysteine + H(+)</text>
        <dbReference type="Rhea" id="RHEA:55572"/>
        <dbReference type="ChEBI" id="CHEBI:15378"/>
        <dbReference type="ChEBI" id="CHEBI:57856"/>
        <dbReference type="ChEBI" id="CHEBI:59789"/>
        <dbReference type="ChEBI" id="CHEBI:139070"/>
        <dbReference type="ChEBI" id="CHEBI:139071"/>
    </reaction>
    <physiologicalReaction direction="left-to-right" evidence="1">
        <dbReference type="Rhea" id="RHEA:55573"/>
    </physiologicalReaction>
</comment>
<comment type="catalytic activity">
    <reaction evidence="1">
        <text>baeocystin + S-adenosyl-L-methionine = psilocybin + S-adenosyl-L-homocysteine + H(+)</text>
        <dbReference type="Rhea" id="RHEA:55576"/>
        <dbReference type="ChEBI" id="CHEBI:15378"/>
        <dbReference type="ChEBI" id="CHEBI:57856"/>
        <dbReference type="ChEBI" id="CHEBI:59789"/>
        <dbReference type="ChEBI" id="CHEBI:139071"/>
        <dbReference type="ChEBI" id="CHEBI:139072"/>
    </reaction>
    <physiologicalReaction direction="left-to-right" evidence="1">
        <dbReference type="Rhea" id="RHEA:55577"/>
    </physiologicalReaction>
</comment>
<comment type="pathway">
    <text evidence="7">Secondary metabolite biosynthesis.</text>
</comment>
<comment type="subunit">
    <text evidence="1">Monomer.</text>
</comment>
<comment type="domain">
    <text evidence="1">The conserved NPPF motif is required for catalysis and represent the basis of substrate specificity toward norbaeocystin.</text>
</comment>
<comment type="domain">
    <text evidence="1">Residue Asn-247 is essential to allow enough space in the active site for multiple methylations while also participating in a network of hydrogen bonds that stabilizes secondary structure elements in the immediate vicinity of the active site for optimal methylation of norbaeocystin.</text>
</comment>
<comment type="biotechnology">
    <text evidence="2">The pharmaceutical interesting psilocybin as a treatment option against depression and anxiety is being investigated in advanced clinical trials.</text>
</comment>
<comment type="similarity">
    <text evidence="6">Belongs to the methyltransferase superfamily. METTL16/RlmF family.</text>
</comment>
<proteinExistence type="evidence at protein level"/>
<name>PSIM_PSICY</name>
<evidence type="ECO:0000250" key="1">
    <source>
        <dbReference type="UniProtKB" id="P0DPA9"/>
    </source>
</evidence>
<evidence type="ECO:0000269" key="2">
    <source>
    </source>
</evidence>
<evidence type="ECO:0000269" key="3">
    <source>
    </source>
</evidence>
<evidence type="ECO:0000269" key="4">
    <source>
    </source>
</evidence>
<evidence type="ECO:0000303" key="5">
    <source>
    </source>
</evidence>
<evidence type="ECO:0000305" key="6"/>
<evidence type="ECO:0000305" key="7">
    <source>
    </source>
</evidence>
<dbReference type="EC" id="2.1.1.-" evidence="1"/>
<dbReference type="EC" id="2.1.1.345" evidence="1"/>
<dbReference type="EMBL" id="KY984103">
    <property type="protein sequence ID" value="ASU62241.1"/>
    <property type="molecule type" value="mRNA"/>
</dbReference>
<dbReference type="SMR" id="A0A286LEZ7"/>
<dbReference type="GO" id="GO:0005634">
    <property type="term" value="C:nucleus"/>
    <property type="evidence" value="ECO:0007669"/>
    <property type="project" value="TreeGrafter"/>
</dbReference>
<dbReference type="GO" id="GO:0140381">
    <property type="term" value="F:4-hydroxytryptamine 4-phosphate methyltransferase activity"/>
    <property type="evidence" value="ECO:0007669"/>
    <property type="project" value="UniProtKB-EC"/>
</dbReference>
<dbReference type="GO" id="GO:0140380">
    <property type="term" value="P:psilocybin biosynthetic process"/>
    <property type="evidence" value="ECO:0000250"/>
    <property type="project" value="GO_Central"/>
</dbReference>
<dbReference type="GO" id="GO:0070475">
    <property type="term" value="P:rRNA base methylation"/>
    <property type="evidence" value="ECO:0007669"/>
    <property type="project" value="TreeGrafter"/>
</dbReference>
<dbReference type="CDD" id="cd02440">
    <property type="entry name" value="AdoMet_MTases"/>
    <property type="match status" value="1"/>
</dbReference>
<dbReference type="Gene3D" id="3.40.50.150">
    <property type="entry name" value="Vaccinia Virus protein VP39"/>
    <property type="match status" value="1"/>
</dbReference>
<dbReference type="InterPro" id="IPR017182">
    <property type="entry name" value="METTL16/PsiM"/>
</dbReference>
<dbReference type="InterPro" id="IPR010286">
    <property type="entry name" value="METTL16/RlmF"/>
</dbReference>
<dbReference type="InterPro" id="IPR029063">
    <property type="entry name" value="SAM-dependent_MTases_sf"/>
</dbReference>
<dbReference type="PANTHER" id="PTHR13393:SF0">
    <property type="entry name" value="RNA N6-ADENOSINE-METHYLTRANSFERASE METTL16"/>
    <property type="match status" value="1"/>
</dbReference>
<dbReference type="PANTHER" id="PTHR13393">
    <property type="entry name" value="SAM-DEPENDENT METHYLTRANSFERASE"/>
    <property type="match status" value="1"/>
</dbReference>
<dbReference type="Pfam" id="PF05971">
    <property type="entry name" value="Methyltransf_10"/>
    <property type="match status" value="1"/>
</dbReference>
<dbReference type="PIRSF" id="PIRSF037350">
    <property type="entry name" value="Mtase_ZK1128_prd"/>
    <property type="match status" value="1"/>
</dbReference>
<dbReference type="SUPFAM" id="SSF53335">
    <property type="entry name" value="S-adenosyl-L-methionine-dependent methyltransferases"/>
    <property type="match status" value="1"/>
</dbReference>
<reference key="1">
    <citation type="journal article" date="2017" name="Angew. Chem. Int. Ed.">
        <title>Enzymatic synthesis of psilocybin.</title>
        <authorList>
            <person name="Fricke J."/>
            <person name="Blei F."/>
            <person name="Hoffmeister D."/>
        </authorList>
    </citation>
    <scope>NUCLEOTIDE SEQUENCE [MRNA]</scope>
    <scope>IDENTIFICATION</scope>
    <scope>FUNCTION</scope>
    <scope>PATHWAY</scope>
    <source>
        <strain>FSU 12416</strain>
    </source>
</reference>
<reference key="2">
    <citation type="journal article" date="2016" name="J. Psychopharmacol.">
        <title>Rapid and sustained symptom reduction following psilocybin treatment for anxiety and depression in patients with life-threatening cancer: a randomized controlled trial.</title>
        <authorList>
            <person name="Ross S."/>
            <person name="Bossis A."/>
            <person name="Guss J."/>
            <person name="Agin-Liebes G."/>
            <person name="Malone T."/>
            <person name="Cohen B."/>
            <person name="Mennenga S.E."/>
            <person name="Belser A."/>
            <person name="Kalliontzi K."/>
            <person name="Babb J."/>
            <person name="Su Z."/>
            <person name="Corby P."/>
            <person name="Schmidt B.L."/>
        </authorList>
    </citation>
    <scope>BIOTECHNOLOGY</scope>
</reference>
<reference key="3">
    <citation type="journal article" date="2018" name="Evol. Lett.">
        <title>Horizontal gene cluster transfer increased hallucinogenic mushroom diversity.</title>
        <authorList>
            <person name="Reynolds H.T."/>
            <person name="Vijayakumar V."/>
            <person name="Gluck-Thaler E."/>
            <person name="Korotkin H.B."/>
            <person name="Matheny P.B."/>
            <person name="Slot J.C."/>
        </authorList>
    </citation>
    <scope>FUNCTION</scope>
</reference>
<organism>
    <name type="scientific">Psilocybe cyanescens</name>
    <dbReference type="NCBI Taxonomy" id="93625"/>
    <lineage>
        <taxon>Eukaryota</taxon>
        <taxon>Fungi</taxon>
        <taxon>Dikarya</taxon>
        <taxon>Basidiomycota</taxon>
        <taxon>Agaricomycotina</taxon>
        <taxon>Agaricomycetes</taxon>
        <taxon>Agaricomycetidae</taxon>
        <taxon>Agaricales</taxon>
        <taxon>Agaricineae</taxon>
        <taxon>Strophariaceae</taxon>
        <taxon>Psilocybe</taxon>
    </lineage>
</organism>
<accession>A0A286LEZ7</accession>